<dbReference type="EMBL" id="AL021687">
    <property type="protein sequence ID" value="CAA16708.1"/>
    <property type="status" value="ALT_SEQ"/>
    <property type="molecule type" value="Genomic_DNA"/>
</dbReference>
<dbReference type="EMBL" id="AL161550">
    <property type="protein sequence ID" value="CAB78921.1"/>
    <property type="status" value="ALT_SEQ"/>
    <property type="molecule type" value="Genomic_DNA"/>
</dbReference>
<dbReference type="EMBL" id="CP002687">
    <property type="protein sequence ID" value="AEE84157.1"/>
    <property type="molecule type" value="Genomic_DNA"/>
</dbReference>
<dbReference type="EMBL" id="AY065216">
    <property type="protein sequence ID" value="AAL38692.1"/>
    <property type="molecule type" value="mRNA"/>
</dbReference>
<dbReference type="EMBL" id="AY133757">
    <property type="protein sequence ID" value="AAM91691.1"/>
    <property type="molecule type" value="mRNA"/>
</dbReference>
<dbReference type="EMBL" id="AK176041">
    <property type="protein sequence ID" value="BAD43804.1"/>
    <property type="molecule type" value="mRNA"/>
</dbReference>
<dbReference type="EMBL" id="AK222139">
    <property type="protein sequence ID" value="BAD95177.1"/>
    <property type="molecule type" value="mRNA"/>
</dbReference>
<dbReference type="EMBL" id="AK222181">
    <property type="protein sequence ID" value="BAD95313.1"/>
    <property type="molecule type" value="mRNA"/>
</dbReference>
<dbReference type="EMBL" id="AK229939">
    <property type="protein sequence ID" value="BAF01765.1"/>
    <property type="molecule type" value="mRNA"/>
</dbReference>
<dbReference type="RefSeq" id="NP_193654.2">
    <property type="nucleotide sequence ID" value="NM_118039.5"/>
</dbReference>
<dbReference type="SMR" id="Q8VZ67"/>
<dbReference type="FunCoup" id="Q8VZ67">
    <property type="interactions" value="609"/>
</dbReference>
<dbReference type="STRING" id="3702.Q8VZ67"/>
<dbReference type="iPTMnet" id="Q8VZ67"/>
<dbReference type="PaxDb" id="3702-AT4G19190.1"/>
<dbReference type="ProteomicsDB" id="242905"/>
<dbReference type="EnsemblPlants" id="AT4G19190.1">
    <property type="protein sequence ID" value="AT4G19190.1"/>
    <property type="gene ID" value="AT4G19190"/>
</dbReference>
<dbReference type="GeneID" id="827658"/>
<dbReference type="Gramene" id="AT4G19190.1">
    <property type="protein sequence ID" value="AT4G19190.1"/>
    <property type="gene ID" value="AT4G19190"/>
</dbReference>
<dbReference type="KEGG" id="ath:AT4G19190"/>
<dbReference type="Araport" id="AT4G19190"/>
<dbReference type="TAIR" id="AT4G19190"/>
<dbReference type="eggNOG" id="KOG3794">
    <property type="taxonomic scope" value="Eukaryota"/>
</dbReference>
<dbReference type="HOGENOM" id="CLU_033287_0_0_1"/>
<dbReference type="InParanoid" id="Q8VZ67"/>
<dbReference type="PhylomeDB" id="Q8VZ67"/>
<dbReference type="PRO" id="PR:Q8VZ67"/>
<dbReference type="Proteomes" id="UP000006548">
    <property type="component" value="Chromosome 4"/>
</dbReference>
<dbReference type="ExpressionAtlas" id="Q8VZ67">
    <property type="expression patterns" value="baseline and differential"/>
</dbReference>
<dbReference type="GO" id="GO:0003714">
    <property type="term" value="F:transcription corepressor activity"/>
    <property type="evidence" value="ECO:0007669"/>
    <property type="project" value="InterPro"/>
</dbReference>
<dbReference type="GO" id="GO:0008270">
    <property type="term" value="F:zinc ion binding"/>
    <property type="evidence" value="ECO:0007669"/>
    <property type="project" value="UniProtKB-KW"/>
</dbReference>
<dbReference type="InterPro" id="IPR040014">
    <property type="entry name" value="CIR1"/>
</dbReference>
<dbReference type="InterPro" id="IPR019339">
    <property type="entry name" value="CIR_N_dom"/>
</dbReference>
<dbReference type="InterPro" id="IPR041670">
    <property type="entry name" value="Znf-CCHC_6"/>
</dbReference>
<dbReference type="PANTHER" id="PTHR13151">
    <property type="entry name" value="CBF1 INTERACTING COREPRESSOR CIR"/>
    <property type="match status" value="1"/>
</dbReference>
<dbReference type="PANTHER" id="PTHR13151:SF2">
    <property type="entry name" value="COREPRESSOR INTERACTING WITH RBPJ 1"/>
    <property type="match status" value="1"/>
</dbReference>
<dbReference type="Pfam" id="PF10197">
    <property type="entry name" value="Cir_N"/>
    <property type="match status" value="1"/>
</dbReference>
<dbReference type="Pfam" id="PF15288">
    <property type="entry name" value="zf-CCHC_6"/>
    <property type="match status" value="1"/>
</dbReference>
<dbReference type="SMART" id="SM01083">
    <property type="entry name" value="Cir_N"/>
    <property type="match status" value="1"/>
</dbReference>
<organism>
    <name type="scientific">Arabidopsis thaliana</name>
    <name type="common">Mouse-ear cress</name>
    <dbReference type="NCBI Taxonomy" id="3702"/>
    <lineage>
        <taxon>Eukaryota</taxon>
        <taxon>Viridiplantae</taxon>
        <taxon>Streptophyta</taxon>
        <taxon>Embryophyta</taxon>
        <taxon>Tracheophyta</taxon>
        <taxon>Spermatophyta</taxon>
        <taxon>Magnoliopsida</taxon>
        <taxon>eudicotyledons</taxon>
        <taxon>Gunneridae</taxon>
        <taxon>Pentapetalae</taxon>
        <taxon>rosids</taxon>
        <taxon>malvids</taxon>
        <taxon>Brassicales</taxon>
        <taxon>Brassicaceae</taxon>
        <taxon>Camelineae</taxon>
        <taxon>Arabidopsis</taxon>
    </lineage>
</organism>
<gene>
    <name type="ordered locus">At4g19190</name>
    <name type="ORF">T18B16.160</name>
</gene>
<keyword id="KW-0479">Metal-binding</keyword>
<keyword id="KW-1185">Reference proteome</keyword>
<keyword id="KW-0862">Zinc</keyword>
<keyword id="KW-0863">Zinc-finger</keyword>
<evidence type="ECO:0000256" key="1">
    <source>
        <dbReference type="SAM" id="MobiDB-lite"/>
    </source>
</evidence>
<evidence type="ECO:0000305" key="2"/>
<feature type="chain" id="PRO_0000363411" description="Uncharacterized zinc finger CCHC domain-containing protein At4g19190">
    <location>
        <begin position="1"/>
        <end position="595"/>
    </location>
</feature>
<feature type="zinc finger region" description="CCHC-type; degenerate">
    <location>
        <begin position="211"/>
        <end position="228"/>
    </location>
</feature>
<feature type="region of interest" description="Disordered" evidence="1">
    <location>
        <begin position="112"/>
        <end position="180"/>
    </location>
</feature>
<feature type="region of interest" description="Disordered" evidence="1">
    <location>
        <begin position="254"/>
        <end position="290"/>
    </location>
</feature>
<feature type="region of interest" description="Disordered" evidence="1">
    <location>
        <begin position="310"/>
        <end position="595"/>
    </location>
</feature>
<feature type="compositionally biased region" description="Basic and acidic residues" evidence="1">
    <location>
        <begin position="120"/>
        <end position="133"/>
    </location>
</feature>
<feature type="compositionally biased region" description="Basic and acidic residues" evidence="1">
    <location>
        <begin position="161"/>
        <end position="174"/>
    </location>
</feature>
<feature type="compositionally biased region" description="Basic and acidic residues" evidence="1">
    <location>
        <begin position="256"/>
        <end position="267"/>
    </location>
</feature>
<feature type="compositionally biased region" description="Basic residues" evidence="1">
    <location>
        <begin position="316"/>
        <end position="331"/>
    </location>
</feature>
<feature type="compositionally biased region" description="Basic residues" evidence="1">
    <location>
        <begin position="351"/>
        <end position="364"/>
    </location>
</feature>
<feature type="compositionally biased region" description="Basic and acidic residues" evidence="1">
    <location>
        <begin position="414"/>
        <end position="428"/>
    </location>
</feature>
<feature type="compositionally biased region" description="Basic and acidic residues" evidence="1">
    <location>
        <begin position="470"/>
        <end position="539"/>
    </location>
</feature>
<feature type="compositionally biased region" description="Basic and acidic residues" evidence="1">
    <location>
        <begin position="547"/>
        <end position="565"/>
    </location>
</feature>
<feature type="compositionally biased region" description="Basic residues" evidence="1">
    <location>
        <begin position="584"/>
        <end position="595"/>
    </location>
</feature>
<feature type="sequence conflict" description="In Ref. 4; BAF01765/BAD43804." evidence="2" ref="4">
    <original>M</original>
    <variation>T</variation>
    <location>
        <position position="110"/>
    </location>
</feature>
<comment type="sequence caution" evidence="2">
    <conflict type="erroneous gene model prediction">
        <sequence resource="EMBL-CDS" id="CAA16708"/>
    </conflict>
    <text>The predicted gene has been split into 2 genes: At4g19190 and At4g19191.</text>
</comment>
<comment type="sequence caution" evidence="2">
    <conflict type="erroneous gene model prediction">
        <sequence resource="EMBL-CDS" id="CAB78921"/>
    </conflict>
    <text>The predicted gene has been split into 2 genes: At4g19190 and At4g19191.</text>
</comment>
<proteinExistence type="evidence at transcript level"/>
<accession>Q8VZ67</accession>
<accession>O49677</accession>
<accession>Q56W66</accession>
<accession>Q56WA5</accession>
<accession>Q67ZS6</accession>
<reference key="1">
    <citation type="journal article" date="1999" name="Nature">
        <title>Sequence and analysis of chromosome 4 of the plant Arabidopsis thaliana.</title>
        <authorList>
            <person name="Mayer K.F.X."/>
            <person name="Schueller C."/>
            <person name="Wambutt R."/>
            <person name="Murphy G."/>
            <person name="Volckaert G."/>
            <person name="Pohl T."/>
            <person name="Duesterhoeft A."/>
            <person name="Stiekema W."/>
            <person name="Entian K.-D."/>
            <person name="Terryn N."/>
            <person name="Harris B."/>
            <person name="Ansorge W."/>
            <person name="Brandt P."/>
            <person name="Grivell L.A."/>
            <person name="Rieger M."/>
            <person name="Weichselgartner M."/>
            <person name="de Simone V."/>
            <person name="Obermaier B."/>
            <person name="Mache R."/>
            <person name="Mueller M."/>
            <person name="Kreis M."/>
            <person name="Delseny M."/>
            <person name="Puigdomenech P."/>
            <person name="Watson M."/>
            <person name="Schmidtheini T."/>
            <person name="Reichert B."/>
            <person name="Portetelle D."/>
            <person name="Perez-Alonso M."/>
            <person name="Boutry M."/>
            <person name="Bancroft I."/>
            <person name="Vos P."/>
            <person name="Hoheisel J."/>
            <person name="Zimmermann W."/>
            <person name="Wedler H."/>
            <person name="Ridley P."/>
            <person name="Langham S.-A."/>
            <person name="McCullagh B."/>
            <person name="Bilham L."/>
            <person name="Robben J."/>
            <person name="van der Schueren J."/>
            <person name="Grymonprez B."/>
            <person name="Chuang Y.-J."/>
            <person name="Vandenbussche F."/>
            <person name="Braeken M."/>
            <person name="Weltjens I."/>
            <person name="Voet M."/>
            <person name="Bastiaens I."/>
            <person name="Aert R."/>
            <person name="Defoor E."/>
            <person name="Weitzenegger T."/>
            <person name="Bothe G."/>
            <person name="Ramsperger U."/>
            <person name="Hilbert H."/>
            <person name="Braun M."/>
            <person name="Holzer E."/>
            <person name="Brandt A."/>
            <person name="Peters S."/>
            <person name="van Staveren M."/>
            <person name="Dirkse W."/>
            <person name="Mooijman P."/>
            <person name="Klein Lankhorst R."/>
            <person name="Rose M."/>
            <person name="Hauf J."/>
            <person name="Koetter P."/>
            <person name="Berneiser S."/>
            <person name="Hempel S."/>
            <person name="Feldpausch M."/>
            <person name="Lamberth S."/>
            <person name="Van den Daele H."/>
            <person name="De Keyser A."/>
            <person name="Buysshaert C."/>
            <person name="Gielen J."/>
            <person name="Villarroel R."/>
            <person name="De Clercq R."/>
            <person name="van Montagu M."/>
            <person name="Rogers J."/>
            <person name="Cronin A."/>
            <person name="Quail M.A."/>
            <person name="Bray-Allen S."/>
            <person name="Clark L."/>
            <person name="Doggett J."/>
            <person name="Hall S."/>
            <person name="Kay M."/>
            <person name="Lennard N."/>
            <person name="McLay K."/>
            <person name="Mayes R."/>
            <person name="Pettett A."/>
            <person name="Rajandream M.A."/>
            <person name="Lyne M."/>
            <person name="Benes V."/>
            <person name="Rechmann S."/>
            <person name="Borkova D."/>
            <person name="Bloecker H."/>
            <person name="Scharfe M."/>
            <person name="Grimm M."/>
            <person name="Loehnert T.-H."/>
            <person name="Dose S."/>
            <person name="de Haan M."/>
            <person name="Maarse A.C."/>
            <person name="Schaefer M."/>
            <person name="Mueller-Auer S."/>
            <person name="Gabel C."/>
            <person name="Fuchs M."/>
            <person name="Fartmann B."/>
            <person name="Granderath K."/>
            <person name="Dauner D."/>
            <person name="Herzl A."/>
            <person name="Neumann S."/>
            <person name="Argiriou A."/>
            <person name="Vitale D."/>
            <person name="Liguori R."/>
            <person name="Piravandi E."/>
            <person name="Massenet O."/>
            <person name="Quigley F."/>
            <person name="Clabauld G."/>
            <person name="Muendlein A."/>
            <person name="Felber R."/>
            <person name="Schnabl S."/>
            <person name="Hiller R."/>
            <person name="Schmidt W."/>
            <person name="Lecharny A."/>
            <person name="Aubourg S."/>
            <person name="Chefdor F."/>
            <person name="Cooke R."/>
            <person name="Berger C."/>
            <person name="Monfort A."/>
            <person name="Casacuberta E."/>
            <person name="Gibbons T."/>
            <person name="Weber N."/>
            <person name="Vandenbol M."/>
            <person name="Bargues M."/>
            <person name="Terol J."/>
            <person name="Torres A."/>
            <person name="Perez-Perez A."/>
            <person name="Purnelle B."/>
            <person name="Bent E."/>
            <person name="Johnson S."/>
            <person name="Tacon D."/>
            <person name="Jesse T."/>
            <person name="Heijnen L."/>
            <person name="Schwarz S."/>
            <person name="Scholler P."/>
            <person name="Heber S."/>
            <person name="Francs P."/>
            <person name="Bielke C."/>
            <person name="Frishman D."/>
            <person name="Haase D."/>
            <person name="Lemcke K."/>
            <person name="Mewes H.-W."/>
            <person name="Stocker S."/>
            <person name="Zaccaria P."/>
            <person name="Bevan M."/>
            <person name="Wilson R.K."/>
            <person name="de la Bastide M."/>
            <person name="Habermann K."/>
            <person name="Parnell L."/>
            <person name="Dedhia N."/>
            <person name="Gnoj L."/>
            <person name="Schutz K."/>
            <person name="Huang E."/>
            <person name="Spiegel L."/>
            <person name="Sekhon M."/>
            <person name="Murray J."/>
            <person name="Sheet P."/>
            <person name="Cordes M."/>
            <person name="Abu-Threideh J."/>
            <person name="Stoneking T."/>
            <person name="Kalicki J."/>
            <person name="Graves T."/>
            <person name="Harmon G."/>
            <person name="Edwards J."/>
            <person name="Latreille P."/>
            <person name="Courtney L."/>
            <person name="Cloud J."/>
            <person name="Abbott A."/>
            <person name="Scott K."/>
            <person name="Johnson D."/>
            <person name="Minx P."/>
            <person name="Bentley D."/>
            <person name="Fulton B."/>
            <person name="Miller N."/>
            <person name="Greco T."/>
            <person name="Kemp K."/>
            <person name="Kramer J."/>
            <person name="Fulton L."/>
            <person name="Mardis E."/>
            <person name="Dante M."/>
            <person name="Pepin K."/>
            <person name="Hillier L.W."/>
            <person name="Nelson J."/>
            <person name="Spieth J."/>
            <person name="Ryan E."/>
            <person name="Andrews S."/>
            <person name="Geisel C."/>
            <person name="Layman D."/>
            <person name="Du H."/>
            <person name="Ali J."/>
            <person name="Berghoff A."/>
            <person name="Jones K."/>
            <person name="Drone K."/>
            <person name="Cotton M."/>
            <person name="Joshu C."/>
            <person name="Antonoiu B."/>
            <person name="Zidanic M."/>
            <person name="Strong C."/>
            <person name="Sun H."/>
            <person name="Lamar B."/>
            <person name="Yordan C."/>
            <person name="Ma P."/>
            <person name="Zhong J."/>
            <person name="Preston R."/>
            <person name="Vil D."/>
            <person name="Shekher M."/>
            <person name="Matero A."/>
            <person name="Shah R."/>
            <person name="Swaby I.K."/>
            <person name="O'Shaughnessy A."/>
            <person name="Rodriguez M."/>
            <person name="Hoffman J."/>
            <person name="Till S."/>
            <person name="Granat S."/>
            <person name="Shohdy N."/>
            <person name="Hasegawa A."/>
            <person name="Hameed A."/>
            <person name="Lodhi M."/>
            <person name="Johnson A."/>
            <person name="Chen E."/>
            <person name="Marra M.A."/>
            <person name="Martienssen R."/>
            <person name="McCombie W.R."/>
        </authorList>
    </citation>
    <scope>NUCLEOTIDE SEQUENCE [LARGE SCALE GENOMIC DNA]</scope>
    <source>
        <strain>cv. Columbia</strain>
    </source>
</reference>
<reference key="2">
    <citation type="journal article" date="2017" name="Plant J.">
        <title>Araport11: a complete reannotation of the Arabidopsis thaliana reference genome.</title>
        <authorList>
            <person name="Cheng C.Y."/>
            <person name="Krishnakumar V."/>
            <person name="Chan A.P."/>
            <person name="Thibaud-Nissen F."/>
            <person name="Schobel S."/>
            <person name="Town C.D."/>
        </authorList>
    </citation>
    <scope>GENOME REANNOTATION</scope>
    <source>
        <strain>cv. Columbia</strain>
    </source>
</reference>
<reference key="3">
    <citation type="journal article" date="2003" name="Science">
        <title>Empirical analysis of transcriptional activity in the Arabidopsis genome.</title>
        <authorList>
            <person name="Yamada K."/>
            <person name="Lim J."/>
            <person name="Dale J.M."/>
            <person name="Chen H."/>
            <person name="Shinn P."/>
            <person name="Palm C.J."/>
            <person name="Southwick A.M."/>
            <person name="Wu H.C."/>
            <person name="Kim C.J."/>
            <person name="Nguyen M."/>
            <person name="Pham P.K."/>
            <person name="Cheuk R.F."/>
            <person name="Karlin-Newmann G."/>
            <person name="Liu S.X."/>
            <person name="Lam B."/>
            <person name="Sakano H."/>
            <person name="Wu T."/>
            <person name="Yu G."/>
            <person name="Miranda M."/>
            <person name="Quach H.L."/>
            <person name="Tripp M."/>
            <person name="Chang C.H."/>
            <person name="Lee J.M."/>
            <person name="Toriumi M.J."/>
            <person name="Chan M.M."/>
            <person name="Tang C.C."/>
            <person name="Onodera C.S."/>
            <person name="Deng J.M."/>
            <person name="Akiyama K."/>
            <person name="Ansari Y."/>
            <person name="Arakawa T."/>
            <person name="Banh J."/>
            <person name="Banno F."/>
            <person name="Bowser L."/>
            <person name="Brooks S.Y."/>
            <person name="Carninci P."/>
            <person name="Chao Q."/>
            <person name="Choy N."/>
            <person name="Enju A."/>
            <person name="Goldsmith A.D."/>
            <person name="Gurjal M."/>
            <person name="Hansen N.F."/>
            <person name="Hayashizaki Y."/>
            <person name="Johnson-Hopson C."/>
            <person name="Hsuan V.W."/>
            <person name="Iida K."/>
            <person name="Karnes M."/>
            <person name="Khan S."/>
            <person name="Koesema E."/>
            <person name="Ishida J."/>
            <person name="Jiang P.X."/>
            <person name="Jones T."/>
            <person name="Kawai J."/>
            <person name="Kamiya A."/>
            <person name="Meyers C."/>
            <person name="Nakajima M."/>
            <person name="Narusaka M."/>
            <person name="Seki M."/>
            <person name="Sakurai T."/>
            <person name="Satou M."/>
            <person name="Tamse R."/>
            <person name="Vaysberg M."/>
            <person name="Wallender E.K."/>
            <person name="Wong C."/>
            <person name="Yamamura Y."/>
            <person name="Yuan S."/>
            <person name="Shinozaki K."/>
            <person name="Davis R.W."/>
            <person name="Theologis A."/>
            <person name="Ecker J.R."/>
        </authorList>
    </citation>
    <scope>NUCLEOTIDE SEQUENCE [LARGE SCALE MRNA]</scope>
    <source>
        <strain>cv. Columbia</strain>
    </source>
</reference>
<reference key="4">
    <citation type="submission" date="2006-07" db="EMBL/GenBank/DDBJ databases">
        <title>Large-scale analysis of RIKEN Arabidopsis full-length (RAFL) cDNAs.</title>
        <authorList>
            <person name="Totoki Y."/>
            <person name="Seki M."/>
            <person name="Ishida J."/>
            <person name="Nakajima M."/>
            <person name="Enju A."/>
            <person name="Kamiya A."/>
            <person name="Narusaka M."/>
            <person name="Shin-i T."/>
            <person name="Nakagawa M."/>
            <person name="Sakamoto N."/>
            <person name="Oishi K."/>
            <person name="Kohara Y."/>
            <person name="Kobayashi M."/>
            <person name="Toyoda A."/>
            <person name="Sakaki Y."/>
            <person name="Sakurai T."/>
            <person name="Iida K."/>
            <person name="Akiyama K."/>
            <person name="Satou M."/>
            <person name="Toyoda T."/>
            <person name="Konagaya A."/>
            <person name="Carninci P."/>
            <person name="Kawai J."/>
            <person name="Hayashizaki Y."/>
            <person name="Shinozaki K."/>
        </authorList>
    </citation>
    <scope>NUCLEOTIDE SEQUENCE [LARGE SCALE MRNA]</scope>
    <source>
        <strain>cv. Columbia</strain>
    </source>
</reference>
<name>Y4919_ARATH</name>
<protein>
    <recommendedName>
        <fullName>Uncharacterized zinc finger CCHC domain-containing protein At4g19190</fullName>
    </recommendedName>
</protein>
<sequence length="595" mass="69147">MDGEGEGSGIRLSKRFAGGKVTGGSLEVDYKTKSGTAWSHSFLNQKPWHPLSYPNQRRKWIAEQTHAQHDRRAEEVAREFAQEQEFFKQAALISKKEREKIETMKAVSFMYVRPPGYDPESAKAAEYKDEKHKGQGSSTQDPVADDNVGSRPEESQGGGERTQERKKPRPKDVFGRALPTEEEFEVLKNAPRMETGIPGRVKPFAVEVRNVKCLRCGNFGHQSGDRDCPLKDAVMPNEELRLKRDDPLTAIIAHTDPSEPLKWELKQKPGLSPPRGGFDPDDPNQQIVAEDIFDEYGGFLEGSIPIEILKSMSSDKKRKSKKNKRHKKHSSRTVEETDESSTGSEDSREKRGSKKRKKLKKKSKKQYDSDSLSFEGSGSDSYRLSRRRHTKHVDPSASLKSEVYHQGNSHREKHYYDEKHQKRKEIVDRPSASSDDSDYYRSNSSRKKRSEDDYKSHHRERKQVHSNDPVSEKSQKQHYSESGKIQRVEKEHRYDERRHRYVDMESENRNRSEKKPRYDDRDSEKHHRSVKGKEKHVYEASDDPEEFSDRYRSTKKTESDSESNRRSRKKKHELSSEEEEGESRKHRYSTNRRRN</sequence>